<proteinExistence type="evidence at protein level"/>
<dbReference type="EMBL" id="AF046044">
    <property type="protein sequence ID" value="AAC97604.1"/>
    <property type="molecule type" value="Genomic_DNA"/>
</dbReference>
<dbReference type="EMBL" id="AE014298">
    <property type="protein sequence ID" value="AAF48022.1"/>
    <property type="molecule type" value="Genomic_DNA"/>
</dbReference>
<dbReference type="EMBL" id="BT022187">
    <property type="protein sequence ID" value="AAY51581.1"/>
    <property type="status" value="ALT_INIT"/>
    <property type="molecule type" value="mRNA"/>
</dbReference>
<dbReference type="RefSeq" id="NP_511116.2">
    <property type="nucleotide sequence ID" value="NM_078561.3"/>
</dbReference>
<dbReference type="SMR" id="Q9VZ09"/>
<dbReference type="BioGRID" id="58480">
    <property type="interactions" value="32"/>
</dbReference>
<dbReference type="DIP" id="DIP-18301N"/>
<dbReference type="FunCoup" id="Q9VZ09">
    <property type="interactions" value="76"/>
</dbReference>
<dbReference type="IntAct" id="Q9VZ09">
    <property type="interactions" value="10"/>
</dbReference>
<dbReference type="STRING" id="7227.FBpp0073317"/>
<dbReference type="PaxDb" id="7227-FBpp0073317"/>
<dbReference type="DNASU" id="32068"/>
<dbReference type="EnsemblMetazoa" id="FBtr0073461">
    <property type="protein sequence ID" value="FBpp0073317"/>
    <property type="gene ID" value="FBgn0003411"/>
</dbReference>
<dbReference type="GeneID" id="32068"/>
<dbReference type="KEGG" id="dme:Dmel_CG1641"/>
<dbReference type="UCSC" id="CG1641-RA">
    <property type="organism name" value="d. melanogaster"/>
</dbReference>
<dbReference type="AGR" id="FB:FBgn0003411"/>
<dbReference type="CTD" id="32068"/>
<dbReference type="FlyBase" id="FBgn0003411">
    <property type="gene designation" value="sisA"/>
</dbReference>
<dbReference type="VEuPathDB" id="VectorBase:FBgn0003411"/>
<dbReference type="eggNOG" id="ENOG502TB94">
    <property type="taxonomic scope" value="Eukaryota"/>
</dbReference>
<dbReference type="HOGENOM" id="CLU_1397715_0_0_1"/>
<dbReference type="InParanoid" id="Q9VZ09"/>
<dbReference type="OMA" id="HKFVCSQ"/>
<dbReference type="OrthoDB" id="7935458at2759"/>
<dbReference type="PhylomeDB" id="Q9VZ09"/>
<dbReference type="BioGRID-ORCS" id="32068">
    <property type="hits" value="0 hits in 1 CRISPR screen"/>
</dbReference>
<dbReference type="GenomeRNAi" id="32068"/>
<dbReference type="PRO" id="PR:Q9VZ09"/>
<dbReference type="Proteomes" id="UP000000803">
    <property type="component" value="Chromosome X"/>
</dbReference>
<dbReference type="Bgee" id="FBgn0003411">
    <property type="expression patterns" value="Expressed in seminal fluid secreting gland and 10 other cell types or tissues"/>
</dbReference>
<dbReference type="GO" id="GO:0005634">
    <property type="term" value="C:nucleus"/>
    <property type="evidence" value="ECO:0000305"/>
    <property type="project" value="FlyBase"/>
</dbReference>
<dbReference type="GO" id="GO:0003700">
    <property type="term" value="F:DNA-binding transcription factor activity"/>
    <property type="evidence" value="ECO:0000303"/>
    <property type="project" value="FlyBase"/>
</dbReference>
<dbReference type="GO" id="GO:0000981">
    <property type="term" value="F:DNA-binding transcription factor activity, RNA polymerase II-specific"/>
    <property type="evidence" value="ECO:0000250"/>
    <property type="project" value="FlyBase"/>
</dbReference>
<dbReference type="GO" id="GO:0007496">
    <property type="term" value="P:anterior midgut development"/>
    <property type="evidence" value="ECO:0000315"/>
    <property type="project" value="FlyBase"/>
</dbReference>
<dbReference type="GO" id="GO:0030154">
    <property type="term" value="P:cell differentiation"/>
    <property type="evidence" value="ECO:0007669"/>
    <property type="project" value="UniProtKB-KW"/>
</dbReference>
<dbReference type="GO" id="GO:0007492">
    <property type="term" value="P:endoderm development"/>
    <property type="evidence" value="ECO:0000315"/>
    <property type="project" value="FlyBase"/>
</dbReference>
<dbReference type="GO" id="GO:0045944">
    <property type="term" value="P:positive regulation of transcription by RNA polymerase II"/>
    <property type="evidence" value="ECO:0000315"/>
    <property type="project" value="FlyBase"/>
</dbReference>
<dbReference type="GO" id="GO:0007497">
    <property type="term" value="P:posterior midgut development"/>
    <property type="evidence" value="ECO:0000315"/>
    <property type="project" value="FlyBase"/>
</dbReference>
<dbReference type="GO" id="GO:0007538">
    <property type="term" value="P:primary sex determination"/>
    <property type="evidence" value="ECO:0000315"/>
    <property type="project" value="FlyBase"/>
</dbReference>
<dbReference type="GO" id="GO:0007530">
    <property type="term" value="P:sex determination"/>
    <property type="evidence" value="ECO:0000316"/>
    <property type="project" value="FlyBase"/>
</dbReference>
<dbReference type="GO" id="GO:0007540">
    <property type="term" value="P:sex determination, establishment of X:A ratio"/>
    <property type="evidence" value="ECO:0000304"/>
    <property type="project" value="FlyBase"/>
</dbReference>
<dbReference type="GO" id="GO:0007548">
    <property type="term" value="P:sex differentiation"/>
    <property type="evidence" value="ECO:0007669"/>
    <property type="project" value="UniProtKB-KW"/>
</dbReference>
<name>SISA_DROME</name>
<keyword id="KW-0217">Developmental protein</keyword>
<keyword id="KW-0221">Differentiation</keyword>
<keyword id="KW-0539">Nucleus</keyword>
<keyword id="KW-1185">Reference proteome</keyword>
<keyword id="KW-0726">Sexual differentiation</keyword>
<keyword id="KW-0804">Transcription</keyword>
<keyword id="KW-0805">Transcription regulation</keyword>
<organism>
    <name type="scientific">Drosophila melanogaster</name>
    <name type="common">Fruit fly</name>
    <dbReference type="NCBI Taxonomy" id="7227"/>
    <lineage>
        <taxon>Eukaryota</taxon>
        <taxon>Metazoa</taxon>
        <taxon>Ecdysozoa</taxon>
        <taxon>Arthropoda</taxon>
        <taxon>Hexapoda</taxon>
        <taxon>Insecta</taxon>
        <taxon>Pterygota</taxon>
        <taxon>Neoptera</taxon>
        <taxon>Endopterygota</taxon>
        <taxon>Diptera</taxon>
        <taxon>Brachycera</taxon>
        <taxon>Muscomorpha</taxon>
        <taxon>Ephydroidea</taxon>
        <taxon>Drosophilidae</taxon>
        <taxon>Drosophila</taxon>
        <taxon>Sophophora</taxon>
    </lineage>
</organism>
<comment type="function">
    <text evidence="3 6">Involved in sex determination and dosage compensation. Required for proper expression of Sxl in embryonic somatic cells. Also has an essential function in the yolk nuclei. Involved in endoderm migration and midgut formation.</text>
</comment>
<comment type="subunit">
    <text evidence="4 5">Homodimer. Interacts with dpn (via bHLH motif). Interacts with da (via bHLH motif). Interacts with Bap60.</text>
</comment>
<comment type="interaction">
    <interactant intactId="EBI-147605">
        <id>Q9VZ09</id>
    </interactant>
    <interactant intactId="EBI-367267">
        <id>Q86PA6</id>
        <label>da</label>
    </interactant>
    <organismsDiffer>false</organismsDiffer>
    <experiments>3</experiments>
</comment>
<comment type="subcellular location">
    <subcellularLocation>
        <location evidence="8">Nucleus</location>
    </subcellularLocation>
</comment>
<comment type="tissue specificity">
    <text evidence="3 6">Localizes to all the embryonic nuclei until nuclear cycle 9, when expression ceases in the prepole cell nuclei. Associates with the somatic nuclei through cycle 10. By nuclear cycle 12, distributes uniformly in the somatic portion of the embryo and no longer associates with the nuclei. After early cycle 14 (beginning of cellularization) there is very little or no expression in the periphery of the embryo or in either the somatic or germ cells. In the yolk, accumulates at the nuclei from nuclear cycle 8 until 10-11 hours after fertilization.</text>
</comment>
<comment type="developmental stage">
    <text evidence="3 6">Expressed zygotically in embryos from 0 to 12 hours after fertilization, with a peak of expression during the 2 to 4 hour period.</text>
</comment>
<comment type="disruption phenotype">
    <text evidence="3">Homozygous embryonic female lethality. Hemizygous embryonic male lethality. Mutant embryos fail to form the midgut due to the failure of endoderm migration. Consequently, the yolk is left as an unenclosed mass that moves to ectopic locations as development progresses causing a variety of terminal phenotypes.</text>
</comment>
<comment type="caution">
    <text evidence="8">Reported to be a member of the bZIP family but does not match diagnostic signatures for this family and has low similarity to other family members.</text>
</comment>
<comment type="sequence caution" evidence="7">
    <conflict type="erroneous initiation">
        <sequence resource="EMBL-CDS" id="AAY51581"/>
    </conflict>
    <text>Extended N-terminus.</text>
</comment>
<feature type="chain" id="PRO_0000421979" description="Protein sisterless A">
    <location>
        <begin position="1"/>
        <end position="189"/>
    </location>
</feature>
<feature type="region of interest" description="Disordered" evidence="1">
    <location>
        <begin position="93"/>
        <end position="124"/>
    </location>
</feature>
<feature type="compositionally biased region" description="Basic and acidic residues" evidence="1">
    <location>
        <begin position="108"/>
        <end position="121"/>
    </location>
</feature>
<feature type="mutagenesis site" description="In sisA3; embryonic lethal." evidence="3">
    <original>DVKDAQRQRAE</original>
    <variation>GCPASEGR</variation>
    <location>
        <begin position="108"/>
        <end position="118"/>
    </location>
</feature>
<feature type="mutagenesis site" description="In sisA1; embryonic female lethal." evidence="6">
    <original>K</original>
    <variation>E</variation>
    <location>
        <position position="128"/>
    </location>
</feature>
<feature type="sequence conflict" description="In Ref. 1; AAC97604." evidence="7" ref="1">
    <original>E</original>
    <variation>D</variation>
    <location>
        <position position="177"/>
    </location>
</feature>
<protein>
    <recommendedName>
        <fullName evidence="10">Protein sisterless A</fullName>
    </recommendedName>
</protein>
<reference evidence="7" key="1">
    <citation type="journal article" date="1993" name="Genes Dev.">
        <title>A bZIP protein, sisterless-a, collaborates with bHLH transcription factors early in Drosophila development to determine sex.</title>
        <authorList>
            <person name="Erickson J.W."/>
            <person name="Cline T.W."/>
        </authorList>
    </citation>
    <scope>NUCLEOTIDE SEQUENCE [MRNA]</scope>
    <scope>FUNCTION</scope>
    <scope>TISSUE SPECIFICITY</scope>
    <scope>DEVELOPMENTAL STAGE</scope>
    <scope>MUTAGENESIS OF LYS-128</scope>
    <source>
        <strain evidence="6">Oregon-R</strain>
        <tissue evidence="6">Embryo</tissue>
    </source>
</reference>
<reference evidence="9" key="2">
    <citation type="journal article" date="1998" name="Development">
        <title>Key aspects of the primary sex determination mechanism are conserved across the genus Drosophila.</title>
        <authorList>
            <person name="Erickson J.W."/>
            <person name="Cline T.W."/>
        </authorList>
    </citation>
    <scope>NUCLEOTIDE SEQUENCE [GENOMIC DNA]</scope>
    <source>
        <strain evidence="9">Oregon-R</strain>
    </source>
</reference>
<reference evidence="7" key="3">
    <citation type="journal article" date="2000" name="Genetics">
        <title>The Drosophila melanogaster sex determination gene sisA is required in yolk nuclei for midgut formation.</title>
        <authorList>
            <person name="Walker J.J."/>
            <person name="Lee K.K."/>
            <person name="Desai R.N."/>
            <person name="Erickson J.W."/>
        </authorList>
    </citation>
    <scope>NUCLEOTIDE SEQUENCE [GENOMIC DNA]</scope>
    <scope>FUNCTION</scope>
    <scope>TISSUE SPECIFICITY</scope>
    <scope>DEVELOPMENTAL STAGE</scope>
    <scope>DISRUPTION PHENOTYPE</scope>
    <scope>MUTAGENESIS OF 108-ASP--GLU-118</scope>
</reference>
<reference evidence="10" key="4">
    <citation type="journal article" date="2000" name="Science">
        <title>The genome sequence of Drosophila melanogaster.</title>
        <authorList>
            <person name="Adams M.D."/>
            <person name="Celniker S.E."/>
            <person name="Holt R.A."/>
            <person name="Evans C.A."/>
            <person name="Gocayne J.D."/>
            <person name="Amanatides P.G."/>
            <person name="Scherer S.E."/>
            <person name="Li P.W."/>
            <person name="Hoskins R.A."/>
            <person name="Galle R.F."/>
            <person name="George R.A."/>
            <person name="Lewis S.E."/>
            <person name="Richards S."/>
            <person name="Ashburner M."/>
            <person name="Henderson S.N."/>
            <person name="Sutton G.G."/>
            <person name="Wortman J.R."/>
            <person name="Yandell M.D."/>
            <person name="Zhang Q."/>
            <person name="Chen L.X."/>
            <person name="Brandon R.C."/>
            <person name="Rogers Y.-H.C."/>
            <person name="Blazej R.G."/>
            <person name="Champe M."/>
            <person name="Pfeiffer B.D."/>
            <person name="Wan K.H."/>
            <person name="Doyle C."/>
            <person name="Baxter E.G."/>
            <person name="Helt G."/>
            <person name="Nelson C.R."/>
            <person name="Miklos G.L.G."/>
            <person name="Abril J.F."/>
            <person name="Agbayani A."/>
            <person name="An H.-J."/>
            <person name="Andrews-Pfannkoch C."/>
            <person name="Baldwin D."/>
            <person name="Ballew R.M."/>
            <person name="Basu A."/>
            <person name="Baxendale J."/>
            <person name="Bayraktaroglu L."/>
            <person name="Beasley E.M."/>
            <person name="Beeson K.Y."/>
            <person name="Benos P.V."/>
            <person name="Berman B.P."/>
            <person name="Bhandari D."/>
            <person name="Bolshakov S."/>
            <person name="Borkova D."/>
            <person name="Botchan M.R."/>
            <person name="Bouck J."/>
            <person name="Brokstein P."/>
            <person name="Brottier P."/>
            <person name="Burtis K.C."/>
            <person name="Busam D.A."/>
            <person name="Butler H."/>
            <person name="Cadieu E."/>
            <person name="Center A."/>
            <person name="Chandra I."/>
            <person name="Cherry J.M."/>
            <person name="Cawley S."/>
            <person name="Dahlke C."/>
            <person name="Davenport L.B."/>
            <person name="Davies P."/>
            <person name="de Pablos B."/>
            <person name="Delcher A."/>
            <person name="Deng Z."/>
            <person name="Mays A.D."/>
            <person name="Dew I."/>
            <person name="Dietz S.M."/>
            <person name="Dodson K."/>
            <person name="Doup L.E."/>
            <person name="Downes M."/>
            <person name="Dugan-Rocha S."/>
            <person name="Dunkov B.C."/>
            <person name="Dunn P."/>
            <person name="Durbin K.J."/>
            <person name="Evangelista C.C."/>
            <person name="Ferraz C."/>
            <person name="Ferriera S."/>
            <person name="Fleischmann W."/>
            <person name="Fosler C."/>
            <person name="Gabrielian A.E."/>
            <person name="Garg N.S."/>
            <person name="Gelbart W.M."/>
            <person name="Glasser K."/>
            <person name="Glodek A."/>
            <person name="Gong F."/>
            <person name="Gorrell J.H."/>
            <person name="Gu Z."/>
            <person name="Guan P."/>
            <person name="Harris M."/>
            <person name="Harris N.L."/>
            <person name="Harvey D.A."/>
            <person name="Heiman T.J."/>
            <person name="Hernandez J.R."/>
            <person name="Houck J."/>
            <person name="Hostin D."/>
            <person name="Houston K.A."/>
            <person name="Howland T.J."/>
            <person name="Wei M.-H."/>
            <person name="Ibegwam C."/>
            <person name="Jalali M."/>
            <person name="Kalush F."/>
            <person name="Karpen G.H."/>
            <person name="Ke Z."/>
            <person name="Kennison J.A."/>
            <person name="Ketchum K.A."/>
            <person name="Kimmel B.E."/>
            <person name="Kodira C.D."/>
            <person name="Kraft C.L."/>
            <person name="Kravitz S."/>
            <person name="Kulp D."/>
            <person name="Lai Z."/>
            <person name="Lasko P."/>
            <person name="Lei Y."/>
            <person name="Levitsky A.A."/>
            <person name="Li J.H."/>
            <person name="Li Z."/>
            <person name="Liang Y."/>
            <person name="Lin X."/>
            <person name="Liu X."/>
            <person name="Mattei B."/>
            <person name="McIntosh T.C."/>
            <person name="McLeod M.P."/>
            <person name="McPherson D."/>
            <person name="Merkulov G."/>
            <person name="Milshina N.V."/>
            <person name="Mobarry C."/>
            <person name="Morris J."/>
            <person name="Moshrefi A."/>
            <person name="Mount S.M."/>
            <person name="Moy M."/>
            <person name="Murphy B."/>
            <person name="Murphy L."/>
            <person name="Muzny D.M."/>
            <person name="Nelson D.L."/>
            <person name="Nelson D.R."/>
            <person name="Nelson K.A."/>
            <person name="Nixon K."/>
            <person name="Nusskern D.R."/>
            <person name="Pacleb J.M."/>
            <person name="Palazzolo M."/>
            <person name="Pittman G.S."/>
            <person name="Pan S."/>
            <person name="Pollard J."/>
            <person name="Puri V."/>
            <person name="Reese M.G."/>
            <person name="Reinert K."/>
            <person name="Remington K."/>
            <person name="Saunders R.D.C."/>
            <person name="Scheeler F."/>
            <person name="Shen H."/>
            <person name="Shue B.C."/>
            <person name="Siden-Kiamos I."/>
            <person name="Simpson M."/>
            <person name="Skupski M.P."/>
            <person name="Smith T.J."/>
            <person name="Spier E."/>
            <person name="Spradling A.C."/>
            <person name="Stapleton M."/>
            <person name="Strong R."/>
            <person name="Sun E."/>
            <person name="Svirskas R."/>
            <person name="Tector C."/>
            <person name="Turner R."/>
            <person name="Venter E."/>
            <person name="Wang A.H."/>
            <person name="Wang X."/>
            <person name="Wang Z.-Y."/>
            <person name="Wassarman D.A."/>
            <person name="Weinstock G.M."/>
            <person name="Weissenbach J."/>
            <person name="Williams S.M."/>
            <person name="Woodage T."/>
            <person name="Worley K.C."/>
            <person name="Wu D."/>
            <person name="Yang S."/>
            <person name="Yao Q.A."/>
            <person name="Ye J."/>
            <person name="Yeh R.-F."/>
            <person name="Zaveri J.S."/>
            <person name="Zhan M."/>
            <person name="Zhang G."/>
            <person name="Zhao Q."/>
            <person name="Zheng L."/>
            <person name="Zheng X.H."/>
            <person name="Zhong F.N."/>
            <person name="Zhong W."/>
            <person name="Zhou X."/>
            <person name="Zhu S.C."/>
            <person name="Zhu X."/>
            <person name="Smith H.O."/>
            <person name="Gibbs R.A."/>
            <person name="Myers E.W."/>
            <person name="Rubin G.M."/>
            <person name="Venter J.C."/>
        </authorList>
    </citation>
    <scope>NUCLEOTIDE SEQUENCE [LARGE SCALE GENOMIC DNA]</scope>
    <source>
        <strain evidence="2">Berkeley</strain>
    </source>
</reference>
<reference evidence="10" key="5">
    <citation type="journal article" date="2002" name="Genome Biol.">
        <title>Annotation of the Drosophila melanogaster euchromatic genome: a systematic review.</title>
        <authorList>
            <person name="Misra S."/>
            <person name="Crosby M.A."/>
            <person name="Mungall C.J."/>
            <person name="Matthews B.B."/>
            <person name="Campbell K.S."/>
            <person name="Hradecky P."/>
            <person name="Huang Y."/>
            <person name="Kaminker J.S."/>
            <person name="Millburn G.H."/>
            <person name="Prochnik S.E."/>
            <person name="Smith C.D."/>
            <person name="Tupy J.L."/>
            <person name="Whitfield E.J."/>
            <person name="Bayraktaroglu L."/>
            <person name="Berman B.P."/>
            <person name="Bettencourt B.R."/>
            <person name="Celniker S.E."/>
            <person name="de Grey A.D.N.J."/>
            <person name="Drysdale R.A."/>
            <person name="Harris N.L."/>
            <person name="Richter J."/>
            <person name="Russo S."/>
            <person name="Schroeder A.J."/>
            <person name="Shu S.Q."/>
            <person name="Stapleton M."/>
            <person name="Yamada C."/>
            <person name="Ashburner M."/>
            <person name="Gelbart W.M."/>
            <person name="Rubin G.M."/>
            <person name="Lewis S.E."/>
        </authorList>
    </citation>
    <scope>GENOME REANNOTATION</scope>
    <source>
        <strain>Berkeley</strain>
    </source>
</reference>
<reference evidence="11" key="6">
    <citation type="submission" date="2005-05" db="EMBL/GenBank/DDBJ databases">
        <authorList>
            <person name="Stapleton M."/>
            <person name="Carlson J."/>
            <person name="Chavez C."/>
            <person name="Frise E."/>
            <person name="George R."/>
            <person name="Pacleb J."/>
            <person name="Park S."/>
            <person name="Wan K."/>
            <person name="Yu C."/>
            <person name="Celniker S."/>
        </authorList>
    </citation>
    <scope>NUCLEOTIDE SEQUENCE [MRNA]</scope>
</reference>
<reference evidence="7" key="7">
    <citation type="journal article" date="1995" name="Mol. Gen. Genet.">
        <title>Protein-protein interactions among components of the Drosophila primary sex determination signal.</title>
        <authorList>
            <person name="Liu Y."/>
            <person name="Belote J.M."/>
        </authorList>
    </citation>
    <scope>HOMODIMERIZATION</scope>
    <scope>INTERACTION WITH DPN AND DA</scope>
</reference>
<reference evidence="7" key="8">
    <citation type="journal article" date="2005" name="J. Mol. Biol.">
        <title>Drosophila BAP60 is an essential component of the Brahma complex, required for gene activation and repression.</title>
        <authorList>
            <person name="Moller A."/>
            <person name="Avila F.W."/>
            <person name="Erickson J.W."/>
            <person name="Jackle H."/>
        </authorList>
    </citation>
    <scope>INTERACTION WITH BAP60</scope>
</reference>
<sequence length="189" mass="21290">MERSHLYLPTLSYAAMGHVYAPYRGSSSPALSTASSTSSKPEQIEELVSQQLHHLKMHYADEEQRYVDQMLLENPIVVERRAPPPLKTELAMDCRGSGSGSGSGSGSDVKDAQRQRAESCRKSRYNNKIKKAKLRFRHKFVSGQLKKSAVMLDTMRDVIAQAERQLLERGYPAATLERMRATFGLEMEQ</sequence>
<accession>Q9VZ09</accession>
<accession>Q24525</accession>
<accession>Q4V6W9</accession>
<evidence type="ECO:0000256" key="1">
    <source>
        <dbReference type="SAM" id="MobiDB-lite"/>
    </source>
</evidence>
<evidence type="ECO:0000269" key="2">
    <source>
    </source>
</evidence>
<evidence type="ECO:0000269" key="3">
    <source>
    </source>
</evidence>
<evidence type="ECO:0000269" key="4">
    <source>
    </source>
</evidence>
<evidence type="ECO:0000269" key="5">
    <source>
    </source>
</evidence>
<evidence type="ECO:0000269" key="6">
    <source>
    </source>
</evidence>
<evidence type="ECO:0000305" key="7"/>
<evidence type="ECO:0000305" key="8">
    <source>
    </source>
</evidence>
<evidence type="ECO:0000312" key="9">
    <source>
        <dbReference type="EMBL" id="AAC97604.1"/>
    </source>
</evidence>
<evidence type="ECO:0000312" key="10">
    <source>
        <dbReference type="EMBL" id="AAF48022.1"/>
    </source>
</evidence>
<evidence type="ECO:0000312" key="11">
    <source>
        <dbReference type="EMBL" id="AAY51581.1"/>
    </source>
</evidence>
<gene>
    <name type="primary">sisA</name>
    <name type="ORF">CG1641</name>
</gene>